<proteinExistence type="inferred from homology"/>
<sequence>MKRKKQDRQRHLKETIDANPFITDEALADRFGVSIQTIRLDRMELSIPELRERIKDVAQKQLDEVKALPMEEVFGEIVDLQLDERAISILDVKKEHVFSRTGIARGHYLFAQANSLAVAIIDDDLALTAKATIRFTRQVKAGERVVAKAEVQKVERDRTLVVVNSFVEQELVFSGDFLMYRSAQEQ</sequence>
<accession>Q9KA00</accession>
<evidence type="ECO:0000255" key="1">
    <source>
        <dbReference type="HAMAP-Rule" id="MF_01814"/>
    </source>
</evidence>
<dbReference type="EMBL" id="BA000004">
    <property type="protein sequence ID" value="BAB06213.1"/>
    <property type="molecule type" value="Genomic_DNA"/>
</dbReference>
<dbReference type="PIR" id="F83961">
    <property type="entry name" value="F83961"/>
</dbReference>
<dbReference type="RefSeq" id="WP_010898645.1">
    <property type="nucleotide sequence ID" value="NC_002570.2"/>
</dbReference>
<dbReference type="SMR" id="Q9KA00"/>
<dbReference type="STRING" id="272558.gene:10728392"/>
<dbReference type="GeneID" id="87598013"/>
<dbReference type="KEGG" id="bha:BH2494"/>
<dbReference type="eggNOG" id="COG1349">
    <property type="taxonomic scope" value="Bacteria"/>
</dbReference>
<dbReference type="HOGENOM" id="CLU_095708_0_0_9"/>
<dbReference type="OrthoDB" id="1706183at2"/>
<dbReference type="Proteomes" id="UP000001258">
    <property type="component" value="Chromosome"/>
</dbReference>
<dbReference type="GO" id="GO:0003677">
    <property type="term" value="F:DNA binding"/>
    <property type="evidence" value="ECO:0007669"/>
    <property type="project" value="UniProtKB-KW"/>
</dbReference>
<dbReference type="GO" id="GO:0003700">
    <property type="term" value="F:DNA-binding transcription factor activity"/>
    <property type="evidence" value="ECO:0007669"/>
    <property type="project" value="UniProtKB-UniRule"/>
</dbReference>
<dbReference type="GO" id="GO:0006633">
    <property type="term" value="P:fatty acid biosynthetic process"/>
    <property type="evidence" value="ECO:0007669"/>
    <property type="project" value="UniProtKB-KW"/>
</dbReference>
<dbReference type="GO" id="GO:0045892">
    <property type="term" value="P:negative regulation of DNA-templated transcription"/>
    <property type="evidence" value="ECO:0007669"/>
    <property type="project" value="UniProtKB-UniRule"/>
</dbReference>
<dbReference type="GO" id="GO:0045717">
    <property type="term" value="P:negative regulation of fatty acid biosynthetic process"/>
    <property type="evidence" value="ECO:0007669"/>
    <property type="project" value="UniProtKB-UniRule"/>
</dbReference>
<dbReference type="CDD" id="cd03440">
    <property type="entry name" value="hot_dog"/>
    <property type="match status" value="1"/>
</dbReference>
<dbReference type="Gene3D" id="3.10.129.10">
    <property type="entry name" value="Hotdog Thioesterase"/>
    <property type="match status" value="1"/>
</dbReference>
<dbReference type="Gene3D" id="1.10.10.10">
    <property type="entry name" value="Winged helix-like DNA-binding domain superfamily/Winged helix DNA-binding domain"/>
    <property type="match status" value="1"/>
</dbReference>
<dbReference type="HAMAP" id="MF_01814">
    <property type="entry name" value="Transcrip_fact_FapR"/>
    <property type="match status" value="1"/>
</dbReference>
<dbReference type="InterPro" id="IPR029069">
    <property type="entry name" value="HotDog_dom_sf"/>
</dbReference>
<dbReference type="InterPro" id="IPR006683">
    <property type="entry name" value="Thioestr_dom"/>
</dbReference>
<dbReference type="InterPro" id="IPR017275">
    <property type="entry name" value="Transcription_factor_FapR"/>
</dbReference>
<dbReference type="InterPro" id="IPR036388">
    <property type="entry name" value="WH-like_DNA-bd_sf"/>
</dbReference>
<dbReference type="NCBIfam" id="NF003359">
    <property type="entry name" value="PRK04424.1"/>
    <property type="match status" value="1"/>
</dbReference>
<dbReference type="Pfam" id="PF03061">
    <property type="entry name" value="4HBT"/>
    <property type="match status" value="1"/>
</dbReference>
<dbReference type="PIRSF" id="PIRSF037733">
    <property type="entry name" value="Transcription_factor_FapR"/>
    <property type="match status" value="1"/>
</dbReference>
<dbReference type="SUPFAM" id="SSF54637">
    <property type="entry name" value="Thioesterase/thiol ester dehydrase-isomerase"/>
    <property type="match status" value="1"/>
</dbReference>
<gene>
    <name evidence="1" type="primary">fapR</name>
    <name type="ordered locus">BH2494</name>
</gene>
<name>FAPR_HALH5</name>
<feature type="chain" id="PRO_0000172817" description="Transcription factor FapR">
    <location>
        <begin position="1"/>
        <end position="186"/>
    </location>
</feature>
<keyword id="KW-0238">DNA-binding</keyword>
<keyword id="KW-0275">Fatty acid biosynthesis</keyword>
<keyword id="KW-0276">Fatty acid metabolism</keyword>
<keyword id="KW-0444">Lipid biosynthesis</keyword>
<keyword id="KW-0443">Lipid metabolism</keyword>
<keyword id="KW-1185">Reference proteome</keyword>
<keyword id="KW-0678">Repressor</keyword>
<keyword id="KW-0804">Transcription</keyword>
<keyword id="KW-0805">Transcription regulation</keyword>
<organism>
    <name type="scientific">Halalkalibacterium halodurans (strain ATCC BAA-125 / DSM 18197 / FERM 7344 / JCM 9153 / C-125)</name>
    <name type="common">Bacillus halodurans</name>
    <dbReference type="NCBI Taxonomy" id="272558"/>
    <lineage>
        <taxon>Bacteria</taxon>
        <taxon>Bacillati</taxon>
        <taxon>Bacillota</taxon>
        <taxon>Bacilli</taxon>
        <taxon>Bacillales</taxon>
        <taxon>Bacillaceae</taxon>
        <taxon>Halalkalibacterium (ex Joshi et al. 2022)</taxon>
    </lineage>
</organism>
<comment type="function">
    <text evidence="1">Transcriptional factor involved in regulation of membrane lipid biosynthesis by repressing genes involved in fatty acid and phospholipid metabolism.</text>
</comment>
<comment type="similarity">
    <text evidence="1">Belongs to the FapR family.</text>
</comment>
<reference key="1">
    <citation type="journal article" date="2000" name="Nucleic Acids Res.">
        <title>Complete genome sequence of the alkaliphilic bacterium Bacillus halodurans and genomic sequence comparison with Bacillus subtilis.</title>
        <authorList>
            <person name="Takami H."/>
            <person name="Nakasone K."/>
            <person name="Takaki Y."/>
            <person name="Maeno G."/>
            <person name="Sasaki R."/>
            <person name="Masui N."/>
            <person name="Fuji F."/>
            <person name="Hirama C."/>
            <person name="Nakamura Y."/>
            <person name="Ogasawara N."/>
            <person name="Kuhara S."/>
            <person name="Horikoshi K."/>
        </authorList>
    </citation>
    <scope>NUCLEOTIDE SEQUENCE [LARGE SCALE GENOMIC DNA]</scope>
    <source>
        <strain>ATCC BAA-125 / DSM 18197 / FERM 7344 / JCM 9153 / C-125</strain>
    </source>
</reference>
<protein>
    <recommendedName>
        <fullName evidence="1">Transcription factor FapR</fullName>
    </recommendedName>
    <alternativeName>
        <fullName evidence="1">Fatty acid and phospholipid biosynthesis regulator</fullName>
    </alternativeName>
</protein>